<accession>Q60333</accession>
<gene>
    <name type="ordered locus">MJ0023</name>
</gene>
<protein>
    <recommendedName>
        <fullName>Uncharacterized protein MJ0023</fullName>
    </recommendedName>
</protein>
<keyword id="KW-0472">Membrane</keyword>
<keyword id="KW-1185">Reference proteome</keyword>
<keyword id="KW-0812">Transmembrane</keyword>
<keyword id="KW-1133">Transmembrane helix</keyword>
<feature type="chain" id="PRO_0000106659" description="Uncharacterized protein MJ0023">
    <location>
        <begin position="1"/>
        <end position="118"/>
    </location>
</feature>
<feature type="transmembrane region" description="Helical" evidence="1">
    <location>
        <begin position="95"/>
        <end position="115"/>
    </location>
</feature>
<proteinExistence type="inferred from homology"/>
<comment type="subcellular location">
    <subcellularLocation>
        <location evidence="2">Membrane</location>
        <topology evidence="2">Single-pass membrane protein</topology>
    </subcellularLocation>
</comment>
<comment type="similarity">
    <text evidence="2">Belongs to the M.jannaschii MJ0023/MJ0349/MJ1072/MJ1074/MJ1107/MJECL16 family.</text>
</comment>
<reference key="1">
    <citation type="journal article" date="1996" name="Science">
        <title>Complete genome sequence of the methanogenic archaeon, Methanococcus jannaschii.</title>
        <authorList>
            <person name="Bult C.J."/>
            <person name="White O."/>
            <person name="Olsen G.J."/>
            <person name="Zhou L."/>
            <person name="Fleischmann R.D."/>
            <person name="Sutton G.G."/>
            <person name="Blake J.A."/>
            <person name="FitzGerald L.M."/>
            <person name="Clayton R.A."/>
            <person name="Gocayne J.D."/>
            <person name="Kerlavage A.R."/>
            <person name="Dougherty B.A."/>
            <person name="Tomb J.-F."/>
            <person name="Adams M.D."/>
            <person name="Reich C.I."/>
            <person name="Overbeek R."/>
            <person name="Kirkness E.F."/>
            <person name="Weinstock K.G."/>
            <person name="Merrick J.M."/>
            <person name="Glodek A."/>
            <person name="Scott J.L."/>
            <person name="Geoghagen N.S.M."/>
            <person name="Weidman J.F."/>
            <person name="Fuhrmann J.L."/>
            <person name="Nguyen D."/>
            <person name="Utterback T.R."/>
            <person name="Kelley J.M."/>
            <person name="Peterson J.D."/>
            <person name="Sadow P.W."/>
            <person name="Hanna M.C."/>
            <person name="Cotton M.D."/>
            <person name="Roberts K.M."/>
            <person name="Hurst M.A."/>
            <person name="Kaine B.P."/>
            <person name="Borodovsky M."/>
            <person name="Klenk H.-P."/>
            <person name="Fraser C.M."/>
            <person name="Smith H.O."/>
            <person name="Woese C.R."/>
            <person name="Venter J.C."/>
        </authorList>
    </citation>
    <scope>NUCLEOTIDE SEQUENCE [LARGE SCALE GENOMIC DNA]</scope>
    <source>
        <strain>ATCC 43067 / DSM 2661 / JAL-1 / JCM 10045 / NBRC 100440</strain>
    </source>
</reference>
<organism>
    <name type="scientific">Methanocaldococcus jannaschii (strain ATCC 43067 / DSM 2661 / JAL-1 / JCM 10045 / NBRC 100440)</name>
    <name type="common">Methanococcus jannaschii</name>
    <dbReference type="NCBI Taxonomy" id="243232"/>
    <lineage>
        <taxon>Archaea</taxon>
        <taxon>Methanobacteriati</taxon>
        <taxon>Methanobacteriota</taxon>
        <taxon>Methanomada group</taxon>
        <taxon>Methanococci</taxon>
        <taxon>Methanococcales</taxon>
        <taxon>Methanocaldococcaceae</taxon>
        <taxon>Methanocaldococcus</taxon>
    </lineage>
</organism>
<sequence>MKSIRISSDYRAKRDNASCFDETFLKSFAEELYNAIIEIIKENKTIIKNEVRDELRNELATKEDILLVEERLGKKIELLNQKIEREIKLVRRDMIIINLVIILAMYAPEIIGKLLIFR</sequence>
<evidence type="ECO:0000255" key="1"/>
<evidence type="ECO:0000305" key="2"/>
<dbReference type="EMBL" id="L77117">
    <property type="protein sequence ID" value="AAB98012.1"/>
    <property type="molecule type" value="Genomic_DNA"/>
</dbReference>
<dbReference type="PIR" id="G64302">
    <property type="entry name" value="G64302"/>
</dbReference>
<dbReference type="SMR" id="Q60333"/>
<dbReference type="PaxDb" id="243232-MJ_0023"/>
<dbReference type="EnsemblBacteria" id="AAB98012">
    <property type="protein sequence ID" value="AAB98012"/>
    <property type="gene ID" value="MJ_0023"/>
</dbReference>
<dbReference type="KEGG" id="mja:MJ_0023"/>
<dbReference type="eggNOG" id="arCOG09652">
    <property type="taxonomic scope" value="Archaea"/>
</dbReference>
<dbReference type="HOGENOM" id="CLU_165881_0_0_2"/>
<dbReference type="InParanoid" id="Q60333"/>
<dbReference type="PhylomeDB" id="Q60333"/>
<dbReference type="Proteomes" id="UP000000805">
    <property type="component" value="Chromosome"/>
</dbReference>
<dbReference type="GO" id="GO:0016020">
    <property type="term" value="C:membrane"/>
    <property type="evidence" value="ECO:0007669"/>
    <property type="project" value="UniProtKB-SubCell"/>
</dbReference>
<name>Y023_METJA</name>